<sequence>MRCLPVFVILLLLIASAPSVDARPKTKDDIPLVSFQDHAKRILQTFESRYDCCKTFECCHWG</sequence>
<organism>
    <name type="scientific">Conus pennaceus</name>
    <name type="common">Feathered cone</name>
    <name type="synonym">Conus episcopus</name>
    <dbReference type="NCBI Taxonomy" id="37335"/>
    <lineage>
        <taxon>Eukaryota</taxon>
        <taxon>Metazoa</taxon>
        <taxon>Spiralia</taxon>
        <taxon>Lophotrochozoa</taxon>
        <taxon>Mollusca</taxon>
        <taxon>Gastropoda</taxon>
        <taxon>Caenogastropoda</taxon>
        <taxon>Neogastropoda</taxon>
        <taxon>Conoidea</taxon>
        <taxon>Conidae</taxon>
        <taxon>Conus</taxon>
        <taxon>Darioconus</taxon>
    </lineage>
</organism>
<keyword id="KW-0027">Amidation</keyword>
<keyword id="KW-0165">Cleavage on pair of basic residues</keyword>
<keyword id="KW-1015">Disulfide bond</keyword>
<keyword id="KW-0964">Secreted</keyword>
<keyword id="KW-0732">Signal</keyword>
<keyword id="KW-0800">Toxin</keyword>
<feature type="signal peptide" evidence="2">
    <location>
        <begin position="1"/>
        <end position="22"/>
    </location>
</feature>
<feature type="propeptide" id="PRO_0000274076" evidence="1">
    <location>
        <begin position="23"/>
        <end position="48"/>
    </location>
</feature>
<feature type="peptide" id="PRO_0000274077" description="Conotoxin Pn-014">
    <location>
        <begin position="50"/>
        <end position="61"/>
    </location>
</feature>
<feature type="modified residue" description="Tryptophan amide" evidence="1">
    <location>
        <position position="61"/>
    </location>
</feature>
<accession>Q9BH86</accession>
<name>CT14_CONPE</name>
<proteinExistence type="inferred from homology"/>
<comment type="subcellular location">
    <subcellularLocation>
        <location evidence="4">Secreted</location>
    </subcellularLocation>
</comment>
<comment type="tissue specificity">
    <text evidence="4">Expressed by the venom duct.</text>
</comment>
<comment type="domain">
    <text evidence="3">The cysteine framework is V (CC-CC).</text>
</comment>
<comment type="PTM">
    <text evidence="3">Contains 2 disulfide bonds that can be either 'C1-C3, C2-C4' or 'C1-C4, C2-C3', since these disulfide connectivities have been observed for conotoxins with cysteine framework V (for examples, see AC P0DQQ7 and AC P81755).</text>
</comment>
<comment type="similarity">
    <text evidence="3">Belongs to the conotoxin T superfamily.</text>
</comment>
<evidence type="ECO:0000250" key="1"/>
<evidence type="ECO:0000255" key="2"/>
<evidence type="ECO:0000305" key="3"/>
<evidence type="ECO:0000305" key="4">
    <source>
    </source>
</evidence>
<evidence type="ECO:0000312" key="5">
    <source>
        <dbReference type="EMBL" id="AAG60382.1"/>
    </source>
</evidence>
<evidence type="ECO:0000312" key="6">
    <source>
        <dbReference type="EMBL" id="AAG60519.1"/>
    </source>
</evidence>
<reference key="1">
    <citation type="journal article" date="2001" name="Mol. Biol. Evol.">
        <title>Mechanisms for evolving hypervariability: the case of conopeptides.</title>
        <authorList>
            <person name="Conticello S.G."/>
            <person name="Gilad Y."/>
            <person name="Avidan N."/>
            <person name="Ben-Asher E."/>
            <person name="Levy Z."/>
            <person name="Fainzilber M."/>
        </authorList>
    </citation>
    <scope>NUCLEOTIDE SEQUENCE [MRNA]</scope>
    <source>
        <tissue>Venom duct</tissue>
    </source>
</reference>
<dbReference type="EMBL" id="AF215098">
    <property type="protein sequence ID" value="AAG60519.1"/>
    <property type="molecule type" value="mRNA"/>
</dbReference>
<dbReference type="EMBL" id="AF214954">
    <property type="protein sequence ID" value="AAG60382.1"/>
    <property type="molecule type" value="mRNA"/>
</dbReference>
<dbReference type="ConoServer" id="641">
    <property type="toxin name" value="Pn-014 precursor"/>
</dbReference>
<dbReference type="GO" id="GO:0005576">
    <property type="term" value="C:extracellular region"/>
    <property type="evidence" value="ECO:0007669"/>
    <property type="project" value="UniProtKB-SubCell"/>
</dbReference>
<dbReference type="GO" id="GO:0090729">
    <property type="term" value="F:toxin activity"/>
    <property type="evidence" value="ECO:0007669"/>
    <property type="project" value="UniProtKB-KW"/>
</dbReference>
<dbReference type="InterPro" id="IPR031565">
    <property type="entry name" value="T-conotoxin"/>
</dbReference>
<dbReference type="Pfam" id="PF16981">
    <property type="entry name" value="Chi-conotoxin"/>
    <property type="match status" value="1"/>
</dbReference>
<protein>
    <recommendedName>
        <fullName evidence="6">Conotoxin Pn-014</fullName>
    </recommendedName>
    <alternativeName>
        <fullName evidence="5">Pn-B01131</fullName>
    </alternativeName>
</protein>